<gene>
    <name type="primary">ohrB</name>
    <name type="synonym">ykzA</name>
    <name type="synonym">yzzE</name>
    <name type="ordered locus">BSU13160</name>
</gene>
<feature type="initiator methionine" description="Removed" evidence="2">
    <location>
        <position position="1"/>
    </location>
</feature>
<feature type="chain" id="PRO_0000172728" description="Organic hydroperoxide resistance protein OhrB">
    <location>
        <begin position="2"/>
        <end position="136"/>
    </location>
</feature>
<feature type="sequence conflict" description="In Ref. 3; AA sequence." evidence="4" ref="3">
    <original>G</original>
    <variation>A</variation>
    <location>
        <position position="16"/>
    </location>
</feature>
<feature type="strand" evidence="5">
    <location>
        <begin position="4"/>
        <end position="12"/>
    </location>
</feature>
<feature type="helix" evidence="5">
    <location>
        <begin position="13"/>
        <end position="15"/>
    </location>
</feature>
<feature type="strand" evidence="5">
    <location>
        <begin position="17"/>
        <end position="20"/>
    </location>
</feature>
<feature type="strand" evidence="5">
    <location>
        <begin position="26"/>
        <end position="29"/>
    </location>
</feature>
<feature type="turn" evidence="5">
    <location>
        <begin position="32"/>
        <end position="38"/>
    </location>
</feature>
<feature type="helix" evidence="5">
    <location>
        <begin position="44"/>
        <end position="65"/>
    </location>
</feature>
<feature type="turn" evidence="5">
    <location>
        <begin position="66"/>
        <end position="68"/>
    </location>
</feature>
<feature type="strand" evidence="5">
    <location>
        <begin position="74"/>
        <end position="84"/>
    </location>
</feature>
<feature type="turn" evidence="5">
    <location>
        <begin position="85"/>
        <end position="88"/>
    </location>
</feature>
<feature type="strand" evidence="5">
    <location>
        <begin position="89"/>
        <end position="99"/>
    </location>
</feature>
<feature type="helix" evidence="5">
    <location>
        <begin position="105"/>
        <end position="118"/>
    </location>
</feature>
<feature type="helix" evidence="5">
    <location>
        <begin position="120"/>
        <end position="125"/>
    </location>
</feature>
<feature type="turn" evidence="5">
    <location>
        <begin position="126"/>
        <end position="128"/>
    </location>
</feature>
<feature type="strand" evidence="5">
    <location>
        <begin position="132"/>
        <end position="136"/>
    </location>
</feature>
<protein>
    <recommendedName>
        <fullName>Organic hydroperoxide resistance protein OhrB</fullName>
    </recommendedName>
    <alternativeName>
        <fullName>General stress protein 17o</fullName>
        <shortName>Gsp17o</shortName>
    </alternativeName>
</protein>
<accession>P80242</accession>
<accession>O34747</accession>
<organism>
    <name type="scientific">Bacillus subtilis (strain 168)</name>
    <dbReference type="NCBI Taxonomy" id="224308"/>
    <lineage>
        <taxon>Bacteria</taxon>
        <taxon>Bacillati</taxon>
        <taxon>Bacillota</taxon>
        <taxon>Bacilli</taxon>
        <taxon>Bacillales</taxon>
        <taxon>Bacillaceae</taxon>
        <taxon>Bacillus</taxon>
    </lineage>
</organism>
<evidence type="ECO:0000269" key="1">
    <source>
    </source>
</evidence>
<evidence type="ECO:0000269" key="2">
    <source>
    </source>
</evidence>
<evidence type="ECO:0000269" key="3">
    <source>
    </source>
</evidence>
<evidence type="ECO:0000305" key="4"/>
<evidence type="ECO:0007829" key="5">
    <source>
        <dbReference type="PDB" id="2BJO"/>
    </source>
</evidence>
<keyword id="KW-0002">3D-structure</keyword>
<keyword id="KW-0903">Direct protein sequencing</keyword>
<keyword id="KW-1185">Reference proteome</keyword>
<keyword id="KW-0346">Stress response</keyword>
<sequence length="136" mass="14600">MALFTAKVTARGGRAGHITSDDGVLDFDIVMPNAKKEGQTGTNPEQLFAAGYAACFGGALEHVAKEQNIEIDSEIEGQVSLMKDESDGGFKIGVTLVVNTKDLDREKAQELVNAAHEFCPYSKATRGNVDVKLELK</sequence>
<reference key="1">
    <citation type="submission" date="1997-11" db="EMBL/GenBank/DDBJ databases">
        <title>Sequence of the Bacillus subtilis genome between xlyA and ykoR.</title>
        <authorList>
            <person name="Devine K.M."/>
        </authorList>
    </citation>
    <scope>NUCLEOTIDE SEQUENCE [GENOMIC DNA]</scope>
    <source>
        <strain>168</strain>
    </source>
</reference>
<reference key="2">
    <citation type="journal article" date="1997" name="Nature">
        <title>The complete genome sequence of the Gram-positive bacterium Bacillus subtilis.</title>
        <authorList>
            <person name="Kunst F."/>
            <person name="Ogasawara N."/>
            <person name="Moszer I."/>
            <person name="Albertini A.M."/>
            <person name="Alloni G."/>
            <person name="Azevedo V."/>
            <person name="Bertero M.G."/>
            <person name="Bessieres P."/>
            <person name="Bolotin A."/>
            <person name="Borchert S."/>
            <person name="Borriss R."/>
            <person name="Boursier L."/>
            <person name="Brans A."/>
            <person name="Braun M."/>
            <person name="Brignell S.C."/>
            <person name="Bron S."/>
            <person name="Brouillet S."/>
            <person name="Bruschi C.V."/>
            <person name="Caldwell B."/>
            <person name="Capuano V."/>
            <person name="Carter N.M."/>
            <person name="Choi S.-K."/>
            <person name="Codani J.-J."/>
            <person name="Connerton I.F."/>
            <person name="Cummings N.J."/>
            <person name="Daniel R.A."/>
            <person name="Denizot F."/>
            <person name="Devine K.M."/>
            <person name="Duesterhoeft A."/>
            <person name="Ehrlich S.D."/>
            <person name="Emmerson P.T."/>
            <person name="Entian K.-D."/>
            <person name="Errington J."/>
            <person name="Fabret C."/>
            <person name="Ferrari E."/>
            <person name="Foulger D."/>
            <person name="Fritz C."/>
            <person name="Fujita M."/>
            <person name="Fujita Y."/>
            <person name="Fuma S."/>
            <person name="Galizzi A."/>
            <person name="Galleron N."/>
            <person name="Ghim S.-Y."/>
            <person name="Glaser P."/>
            <person name="Goffeau A."/>
            <person name="Golightly E.J."/>
            <person name="Grandi G."/>
            <person name="Guiseppi G."/>
            <person name="Guy B.J."/>
            <person name="Haga K."/>
            <person name="Haiech J."/>
            <person name="Harwood C.R."/>
            <person name="Henaut A."/>
            <person name="Hilbert H."/>
            <person name="Holsappel S."/>
            <person name="Hosono S."/>
            <person name="Hullo M.-F."/>
            <person name="Itaya M."/>
            <person name="Jones L.-M."/>
            <person name="Joris B."/>
            <person name="Karamata D."/>
            <person name="Kasahara Y."/>
            <person name="Klaerr-Blanchard M."/>
            <person name="Klein C."/>
            <person name="Kobayashi Y."/>
            <person name="Koetter P."/>
            <person name="Koningstein G."/>
            <person name="Krogh S."/>
            <person name="Kumano M."/>
            <person name="Kurita K."/>
            <person name="Lapidus A."/>
            <person name="Lardinois S."/>
            <person name="Lauber J."/>
            <person name="Lazarevic V."/>
            <person name="Lee S.-M."/>
            <person name="Levine A."/>
            <person name="Liu H."/>
            <person name="Masuda S."/>
            <person name="Mauel C."/>
            <person name="Medigue C."/>
            <person name="Medina N."/>
            <person name="Mellado R.P."/>
            <person name="Mizuno M."/>
            <person name="Moestl D."/>
            <person name="Nakai S."/>
            <person name="Noback M."/>
            <person name="Noone D."/>
            <person name="O'Reilly M."/>
            <person name="Ogawa K."/>
            <person name="Ogiwara A."/>
            <person name="Oudega B."/>
            <person name="Park S.-H."/>
            <person name="Parro V."/>
            <person name="Pohl T.M."/>
            <person name="Portetelle D."/>
            <person name="Porwollik S."/>
            <person name="Prescott A.M."/>
            <person name="Presecan E."/>
            <person name="Pujic P."/>
            <person name="Purnelle B."/>
            <person name="Rapoport G."/>
            <person name="Rey M."/>
            <person name="Reynolds S."/>
            <person name="Rieger M."/>
            <person name="Rivolta C."/>
            <person name="Rocha E."/>
            <person name="Roche B."/>
            <person name="Rose M."/>
            <person name="Sadaie Y."/>
            <person name="Sato T."/>
            <person name="Scanlan E."/>
            <person name="Schleich S."/>
            <person name="Schroeter R."/>
            <person name="Scoffone F."/>
            <person name="Sekiguchi J."/>
            <person name="Sekowska A."/>
            <person name="Seror S.J."/>
            <person name="Serror P."/>
            <person name="Shin B.-S."/>
            <person name="Soldo B."/>
            <person name="Sorokin A."/>
            <person name="Tacconi E."/>
            <person name="Takagi T."/>
            <person name="Takahashi H."/>
            <person name="Takemaru K."/>
            <person name="Takeuchi M."/>
            <person name="Tamakoshi A."/>
            <person name="Tanaka T."/>
            <person name="Terpstra P."/>
            <person name="Tognoni A."/>
            <person name="Tosato V."/>
            <person name="Uchiyama S."/>
            <person name="Vandenbol M."/>
            <person name="Vannier F."/>
            <person name="Vassarotti A."/>
            <person name="Viari A."/>
            <person name="Wambutt R."/>
            <person name="Wedler E."/>
            <person name="Wedler H."/>
            <person name="Weitzenegger T."/>
            <person name="Winters P."/>
            <person name="Wipat A."/>
            <person name="Yamamoto H."/>
            <person name="Yamane K."/>
            <person name="Yasumoto K."/>
            <person name="Yata K."/>
            <person name="Yoshida K."/>
            <person name="Yoshikawa H.-F."/>
            <person name="Zumstein E."/>
            <person name="Yoshikawa H."/>
            <person name="Danchin A."/>
        </authorList>
    </citation>
    <scope>NUCLEOTIDE SEQUENCE [LARGE SCALE GENOMIC DNA]</scope>
    <source>
        <strain>168</strain>
    </source>
</reference>
<reference key="3">
    <citation type="journal article" date="1994" name="Microbiology">
        <title>Analysis of the induction of general stress proteins of Bacillus subtilis.</title>
        <authorList>
            <person name="Voelker U."/>
            <person name="Engelmann S."/>
            <person name="Maul B."/>
            <person name="Riethdorf S."/>
            <person name="Voelker A."/>
            <person name="Schmid R."/>
            <person name="Mach H."/>
            <person name="Hecker M."/>
        </authorList>
    </citation>
    <scope>PROTEIN SEQUENCE OF 2-22</scope>
    <scope>TRANSCRIPTIONAL REGULATION</scope>
    <source>
        <strain>168 / IS58</strain>
    </source>
</reference>
<reference key="4">
    <citation type="journal article" date="1998" name="J. Bacteriol.">
        <title>One of two osmC homologs in Bacillus subtilis is part of the sigmaB-dependent general stress regulon.</title>
        <authorList>
            <person name="Voelker U."/>
            <person name="Andersen K.K."/>
            <person name="Antelmann H."/>
            <person name="Devine K.M."/>
            <person name="Hecker M."/>
        </authorList>
    </citation>
    <scope>TRANSCRIPTIONAL REGULATION</scope>
    <source>
        <strain>168</strain>
    </source>
</reference>
<reference key="5">
    <citation type="journal article" date="2001" name="J. Bacteriol.">
        <title>OhrR is a repressor of ohrA, a key organic hydroperoxide resistance determinant in Bacillus subtilis.</title>
        <authorList>
            <person name="Fuangthong M."/>
            <person name="Atichartpongkul S."/>
            <person name="Mongkolsuk S."/>
            <person name="Helmann J.D."/>
        </authorList>
    </citation>
    <scope>FUNCTION</scope>
    <source>
        <strain>168</strain>
    </source>
</reference>
<comment type="function">
    <text evidence="1">Involved in organic hydroperoxide resistance.</text>
</comment>
<comment type="induction">
    <text evidence="2 3">By heat shock, salt stress, oxidative stress, glucose limitation and oxygen limitation. Expression is sigma B-dependent.</text>
</comment>
<comment type="similarity">
    <text evidence="4">Belongs to the OsmC/Ohr family.</text>
</comment>
<name>OHRB_BACSU</name>
<proteinExistence type="evidence at protein level"/>
<dbReference type="EMBL" id="AJ002571">
    <property type="protein sequence ID" value="CAA05595.1"/>
    <property type="molecule type" value="Genomic_DNA"/>
</dbReference>
<dbReference type="EMBL" id="AL009126">
    <property type="protein sequence ID" value="CAB13173.1"/>
    <property type="molecule type" value="Genomic_DNA"/>
</dbReference>
<dbReference type="PIR" id="F69870">
    <property type="entry name" value="F69870"/>
</dbReference>
<dbReference type="RefSeq" id="NP_389199.1">
    <property type="nucleotide sequence ID" value="NC_000964.3"/>
</dbReference>
<dbReference type="RefSeq" id="WP_003232570.1">
    <property type="nucleotide sequence ID" value="NZ_OZ025638.1"/>
</dbReference>
<dbReference type="PDB" id="2BJO">
    <property type="method" value="X-ray"/>
    <property type="resolution" value="2.10 A"/>
    <property type="chains" value="A/B=2-136"/>
</dbReference>
<dbReference type="PDBsum" id="2BJO"/>
<dbReference type="SMR" id="P80242"/>
<dbReference type="FunCoup" id="P80242">
    <property type="interactions" value="93"/>
</dbReference>
<dbReference type="STRING" id="224308.BSU13160"/>
<dbReference type="PaxDb" id="224308-BSU13160"/>
<dbReference type="EnsemblBacteria" id="CAB13173">
    <property type="protein sequence ID" value="CAB13173"/>
    <property type="gene ID" value="BSU_13160"/>
</dbReference>
<dbReference type="GeneID" id="936734"/>
<dbReference type="KEGG" id="bsu:BSU13160"/>
<dbReference type="PATRIC" id="fig|224308.179.peg.1428"/>
<dbReference type="eggNOG" id="COG1764">
    <property type="taxonomic scope" value="Bacteria"/>
</dbReference>
<dbReference type="InParanoid" id="P80242"/>
<dbReference type="OrthoDB" id="9797508at2"/>
<dbReference type="PhylomeDB" id="P80242"/>
<dbReference type="BioCyc" id="BSUB:BSU13160-MONOMER"/>
<dbReference type="EvolutionaryTrace" id="P80242"/>
<dbReference type="Proteomes" id="UP000001570">
    <property type="component" value="Chromosome"/>
</dbReference>
<dbReference type="GO" id="GO:0006979">
    <property type="term" value="P:response to oxidative stress"/>
    <property type="evidence" value="ECO:0007669"/>
    <property type="project" value="InterPro"/>
</dbReference>
<dbReference type="Gene3D" id="2.20.25.10">
    <property type="match status" value="1"/>
</dbReference>
<dbReference type="Gene3D" id="3.30.300.20">
    <property type="match status" value="1"/>
</dbReference>
<dbReference type="InterPro" id="IPR015946">
    <property type="entry name" value="KH_dom-like_a/b"/>
</dbReference>
<dbReference type="InterPro" id="IPR019953">
    <property type="entry name" value="OHR"/>
</dbReference>
<dbReference type="InterPro" id="IPR003718">
    <property type="entry name" value="OsmC/Ohr_fam"/>
</dbReference>
<dbReference type="InterPro" id="IPR036102">
    <property type="entry name" value="OsmC/Ohrsf"/>
</dbReference>
<dbReference type="NCBIfam" id="TIGR03561">
    <property type="entry name" value="organ_hyd_perox"/>
    <property type="match status" value="1"/>
</dbReference>
<dbReference type="PANTHER" id="PTHR33797">
    <property type="entry name" value="ORGANIC HYDROPEROXIDE RESISTANCE PROTEIN-LIKE"/>
    <property type="match status" value="1"/>
</dbReference>
<dbReference type="PANTHER" id="PTHR33797:SF2">
    <property type="entry name" value="ORGANIC HYDROPEROXIDE RESISTANCE PROTEIN-LIKE"/>
    <property type="match status" value="1"/>
</dbReference>
<dbReference type="Pfam" id="PF02566">
    <property type="entry name" value="OsmC"/>
    <property type="match status" value="1"/>
</dbReference>
<dbReference type="SUPFAM" id="SSF82784">
    <property type="entry name" value="OsmC-like"/>
    <property type="match status" value="1"/>
</dbReference>